<proteinExistence type="inferred from homology"/>
<evidence type="ECO:0000255" key="1">
    <source>
        <dbReference type="HAMAP-Rule" id="MF_00335"/>
    </source>
</evidence>
<evidence type="ECO:0000255" key="2">
    <source>
        <dbReference type="PROSITE-ProRule" id="PRU01175"/>
    </source>
</evidence>
<evidence type="ECO:0000256" key="3">
    <source>
        <dbReference type="SAM" id="MobiDB-lite"/>
    </source>
</evidence>
<keyword id="KW-1003">Cell membrane</keyword>
<keyword id="KW-0255">Endonuclease</keyword>
<keyword id="KW-0378">Hydrolase</keyword>
<keyword id="KW-0472">Membrane</keyword>
<keyword id="KW-0540">Nuclease</keyword>
<keyword id="KW-1185">Reference proteome</keyword>
<keyword id="KW-0694">RNA-binding</keyword>
<keyword id="KW-0812">Transmembrane</keyword>
<keyword id="KW-1133">Transmembrane helix</keyword>
<feature type="chain" id="PRO_0000344892" description="Ribonuclease Y">
    <location>
        <begin position="1"/>
        <end position="547"/>
    </location>
</feature>
<feature type="transmembrane region" description="Helical" evidence="1">
    <location>
        <begin position="6"/>
        <end position="26"/>
    </location>
</feature>
<feature type="domain" description="KH" evidence="1">
    <location>
        <begin position="237"/>
        <end position="300"/>
    </location>
</feature>
<feature type="domain" description="HD" evidence="2">
    <location>
        <begin position="363"/>
        <end position="456"/>
    </location>
</feature>
<feature type="region of interest" description="Disordered" evidence="3">
    <location>
        <begin position="107"/>
        <end position="138"/>
    </location>
</feature>
<comment type="function">
    <text evidence="1">Endoribonuclease that initiates mRNA decay.</text>
</comment>
<comment type="subcellular location">
    <subcellularLocation>
        <location evidence="1">Cell membrane</location>
        <topology evidence="1">Single-pass membrane protein</topology>
    </subcellularLocation>
</comment>
<comment type="similarity">
    <text evidence="1">Belongs to the RNase Y family.</text>
</comment>
<dbReference type="EC" id="3.1.-.-" evidence="1"/>
<dbReference type="EMBL" id="CR954253">
    <property type="protein sequence ID" value="CAI97430.1"/>
    <property type="molecule type" value="Genomic_DNA"/>
</dbReference>
<dbReference type="SMR" id="Q1GB50"/>
<dbReference type="STRING" id="390333.Ldb0600"/>
<dbReference type="KEGG" id="ldb:Ldb0600"/>
<dbReference type="eggNOG" id="COG1418">
    <property type="taxonomic scope" value="Bacteria"/>
</dbReference>
<dbReference type="HOGENOM" id="CLU_028328_1_0_9"/>
<dbReference type="BioCyc" id="LDEL390333:LDB_RS02595-MONOMER"/>
<dbReference type="Proteomes" id="UP000001259">
    <property type="component" value="Chromosome"/>
</dbReference>
<dbReference type="GO" id="GO:0005886">
    <property type="term" value="C:plasma membrane"/>
    <property type="evidence" value="ECO:0007669"/>
    <property type="project" value="UniProtKB-SubCell"/>
</dbReference>
<dbReference type="GO" id="GO:0003723">
    <property type="term" value="F:RNA binding"/>
    <property type="evidence" value="ECO:0007669"/>
    <property type="project" value="UniProtKB-UniRule"/>
</dbReference>
<dbReference type="GO" id="GO:0004521">
    <property type="term" value="F:RNA endonuclease activity"/>
    <property type="evidence" value="ECO:0007669"/>
    <property type="project" value="UniProtKB-UniRule"/>
</dbReference>
<dbReference type="GO" id="GO:0006402">
    <property type="term" value="P:mRNA catabolic process"/>
    <property type="evidence" value="ECO:0007669"/>
    <property type="project" value="UniProtKB-UniRule"/>
</dbReference>
<dbReference type="CDD" id="cd00077">
    <property type="entry name" value="HDc"/>
    <property type="match status" value="1"/>
</dbReference>
<dbReference type="CDD" id="cd22431">
    <property type="entry name" value="KH-I_RNaseY"/>
    <property type="match status" value="1"/>
</dbReference>
<dbReference type="Gene3D" id="1.10.3210.10">
    <property type="entry name" value="Hypothetical protein af1432"/>
    <property type="match status" value="1"/>
</dbReference>
<dbReference type="Gene3D" id="3.30.1370.10">
    <property type="entry name" value="K Homology domain, type 1"/>
    <property type="match status" value="1"/>
</dbReference>
<dbReference type="HAMAP" id="MF_00335">
    <property type="entry name" value="RNase_Y"/>
    <property type="match status" value="1"/>
</dbReference>
<dbReference type="InterPro" id="IPR003607">
    <property type="entry name" value="HD/PDEase_dom"/>
</dbReference>
<dbReference type="InterPro" id="IPR006674">
    <property type="entry name" value="HD_domain"/>
</dbReference>
<dbReference type="InterPro" id="IPR006675">
    <property type="entry name" value="HDIG_dom"/>
</dbReference>
<dbReference type="InterPro" id="IPR004087">
    <property type="entry name" value="KH_dom"/>
</dbReference>
<dbReference type="InterPro" id="IPR004088">
    <property type="entry name" value="KH_dom_type_1"/>
</dbReference>
<dbReference type="InterPro" id="IPR036612">
    <property type="entry name" value="KH_dom_type_1_sf"/>
</dbReference>
<dbReference type="InterPro" id="IPR017705">
    <property type="entry name" value="Ribonuclease_Y"/>
</dbReference>
<dbReference type="InterPro" id="IPR022711">
    <property type="entry name" value="RNase_Y_N"/>
</dbReference>
<dbReference type="NCBIfam" id="TIGR00277">
    <property type="entry name" value="HDIG"/>
    <property type="match status" value="1"/>
</dbReference>
<dbReference type="NCBIfam" id="TIGR03319">
    <property type="entry name" value="RNase_Y"/>
    <property type="match status" value="1"/>
</dbReference>
<dbReference type="PANTHER" id="PTHR12826">
    <property type="entry name" value="RIBONUCLEASE Y"/>
    <property type="match status" value="1"/>
</dbReference>
<dbReference type="PANTHER" id="PTHR12826:SF15">
    <property type="entry name" value="RIBONUCLEASE Y"/>
    <property type="match status" value="1"/>
</dbReference>
<dbReference type="Pfam" id="PF01966">
    <property type="entry name" value="HD"/>
    <property type="match status" value="1"/>
</dbReference>
<dbReference type="Pfam" id="PF00013">
    <property type="entry name" value="KH_1"/>
    <property type="match status" value="1"/>
</dbReference>
<dbReference type="Pfam" id="PF12072">
    <property type="entry name" value="RNase_Y_N"/>
    <property type="match status" value="1"/>
</dbReference>
<dbReference type="SMART" id="SM00471">
    <property type="entry name" value="HDc"/>
    <property type="match status" value="1"/>
</dbReference>
<dbReference type="SMART" id="SM00322">
    <property type="entry name" value="KH"/>
    <property type="match status" value="1"/>
</dbReference>
<dbReference type="SUPFAM" id="SSF54791">
    <property type="entry name" value="Eukaryotic type KH-domain (KH-domain type I)"/>
    <property type="match status" value="1"/>
</dbReference>
<dbReference type="SUPFAM" id="SSF109604">
    <property type="entry name" value="HD-domain/PDEase-like"/>
    <property type="match status" value="1"/>
</dbReference>
<dbReference type="PROSITE" id="PS51831">
    <property type="entry name" value="HD"/>
    <property type="match status" value="1"/>
</dbReference>
<dbReference type="PROSITE" id="PS50084">
    <property type="entry name" value="KH_TYPE_1"/>
    <property type="match status" value="1"/>
</dbReference>
<gene>
    <name evidence="1" type="primary">rny</name>
    <name type="ordered locus">Ldb0600</name>
</gene>
<accession>Q1GB50</accession>
<protein>
    <recommendedName>
        <fullName evidence="1">Ribonuclease Y</fullName>
        <shortName evidence="1">RNase Y</shortName>
        <ecNumber evidence="1">3.1.-.-</ecNumber>
    </recommendedName>
</protein>
<reference key="1">
    <citation type="journal article" date="2006" name="Proc. Natl. Acad. Sci. U.S.A.">
        <title>The complete genome sequence of Lactobacillus bulgaricus reveals extensive and ongoing reductive evolution.</title>
        <authorList>
            <person name="van de Guchte M."/>
            <person name="Penaud S."/>
            <person name="Grimaldi C."/>
            <person name="Barbe V."/>
            <person name="Bryson K."/>
            <person name="Nicolas P."/>
            <person name="Robert C."/>
            <person name="Oztas S."/>
            <person name="Mangenot S."/>
            <person name="Couloux A."/>
            <person name="Loux V."/>
            <person name="Dervyn R."/>
            <person name="Bossy R."/>
            <person name="Bolotin A."/>
            <person name="Batto J.-M."/>
            <person name="Walunas T."/>
            <person name="Gibrat J.-F."/>
            <person name="Bessieres P."/>
            <person name="Weissenbach J."/>
            <person name="Ehrlich S.D."/>
            <person name="Maguin E."/>
        </authorList>
    </citation>
    <scope>NUCLEOTIDE SEQUENCE [LARGE SCALE GENOMIC DNA]</scope>
    <source>
        <strain>ATCC 11842 / DSM 20081 / BCRC 10696 / JCM 1002 / NBRC 13953 / NCIMB 11778 / NCTC 12712 / WDCM 00102 / Lb 14</strain>
    </source>
</reference>
<sequence length="547" mass="61091">MMNNTVFPLATVAVIFLISLVVGCLIGYAIRKNVWETRAENARQSVEAILAKAKAEVEVAKAEIQAQKQAAEAVKRDAETEKKAKILEAQEEIRDYRQKVEDELNRRRDEAARKENRLQQKEDTLDHRSSLLDDREKQLTQRKAQIKQQEEKVAGLLEEAHGLVEKQNDKLLEISRLDEEEAKKIVLAQVSDHLTKEKAELIRANEEEISARADRFAHQIIVDAIQSSAADTVAETTVSVVDLPNDDMKGRIIGREGRNIRSFEAMTGVDLIIDDTPNTVTLSGFDSIRREVAKRALQKLIKDGRIHPARIEEMVDKARKEVNDDIYEAGESALMELGIHRMNPELVKILGRLKYRTSYGQNVLAHSIEVGKLAGTMAAELGLDEKLAVRAGLLHDIGKAIDHDIEGSHVEIGVELTRKYHEPDLVVNAIAAHHGDVPKLSFIADLVVAADTISSARPGARSESLENYIRRLTELEDIAGSYDGVKQAYAIQAGREVRVMVEPGKISDDEITVLAHEIRDRVEKELDYPGNIKITVIREKRAVAVAK</sequence>
<name>RNY_LACDA</name>
<organism>
    <name type="scientific">Lactobacillus delbrueckii subsp. bulgaricus (strain ATCC 11842 / DSM 20081 / BCRC 10696 / JCM 1002 / NBRC 13953 / NCIMB 11778 / NCTC 12712 / WDCM 00102 / Lb 14)</name>
    <dbReference type="NCBI Taxonomy" id="390333"/>
    <lineage>
        <taxon>Bacteria</taxon>
        <taxon>Bacillati</taxon>
        <taxon>Bacillota</taxon>
        <taxon>Bacilli</taxon>
        <taxon>Lactobacillales</taxon>
        <taxon>Lactobacillaceae</taxon>
        <taxon>Lactobacillus</taxon>
    </lineage>
</organism>